<reference key="1">
    <citation type="journal article" date="2010" name="Genome Biol.">
        <title>Structure and dynamics of the pan-genome of Streptococcus pneumoniae and closely related species.</title>
        <authorList>
            <person name="Donati C."/>
            <person name="Hiller N.L."/>
            <person name="Tettelin H."/>
            <person name="Muzzi A."/>
            <person name="Croucher N.J."/>
            <person name="Angiuoli S.V."/>
            <person name="Oggioni M."/>
            <person name="Dunning Hotopp J.C."/>
            <person name="Hu F.Z."/>
            <person name="Riley D.R."/>
            <person name="Covacci A."/>
            <person name="Mitchell T.J."/>
            <person name="Bentley S.D."/>
            <person name="Kilian M."/>
            <person name="Ehrlich G.D."/>
            <person name="Rappuoli R."/>
            <person name="Moxon E.R."/>
            <person name="Masignani V."/>
        </authorList>
    </citation>
    <scope>NUCLEOTIDE SEQUENCE [LARGE SCALE GENOMIC DNA]</scope>
    <source>
        <strain>JJA</strain>
    </source>
</reference>
<sequence length="137" mass="15436">MLVPKRVKHRREFRGKMRGEAKGGKEVAFGEYGLQATTSHWITNRQIEAARIAMTRYMKRGGKVWIKIFPHKSYTAKAIGVRMGSGKGAPEGWVAPVKRGKVMFEIAGVSEEIAREALRLASHKLPVKCKFVKREAE</sequence>
<feature type="chain" id="PRO_1000166383" description="Large ribosomal subunit protein uL16">
    <location>
        <begin position="1"/>
        <end position="137"/>
    </location>
</feature>
<gene>
    <name evidence="1" type="primary">rplP</name>
    <name type="ordered locus">SPJ_0226</name>
</gene>
<comment type="function">
    <text evidence="1">Binds 23S rRNA and is also seen to make contacts with the A and possibly P site tRNAs.</text>
</comment>
<comment type="subunit">
    <text evidence="1">Part of the 50S ribosomal subunit.</text>
</comment>
<comment type="similarity">
    <text evidence="1">Belongs to the universal ribosomal protein uL16 family.</text>
</comment>
<evidence type="ECO:0000255" key="1">
    <source>
        <dbReference type="HAMAP-Rule" id="MF_01342"/>
    </source>
</evidence>
<evidence type="ECO:0000305" key="2"/>
<dbReference type="EMBL" id="CP000919">
    <property type="protein sequence ID" value="ACO18563.1"/>
    <property type="molecule type" value="Genomic_DNA"/>
</dbReference>
<dbReference type="RefSeq" id="WP_000960946.1">
    <property type="nucleotide sequence ID" value="NC_012466.1"/>
</dbReference>
<dbReference type="SMR" id="C1CC13"/>
<dbReference type="GeneID" id="93738964"/>
<dbReference type="KEGG" id="sjj:SPJ_0226"/>
<dbReference type="HOGENOM" id="CLU_078858_2_1_9"/>
<dbReference type="Proteomes" id="UP000002206">
    <property type="component" value="Chromosome"/>
</dbReference>
<dbReference type="GO" id="GO:0022625">
    <property type="term" value="C:cytosolic large ribosomal subunit"/>
    <property type="evidence" value="ECO:0007669"/>
    <property type="project" value="TreeGrafter"/>
</dbReference>
<dbReference type="GO" id="GO:0019843">
    <property type="term" value="F:rRNA binding"/>
    <property type="evidence" value="ECO:0007669"/>
    <property type="project" value="UniProtKB-UniRule"/>
</dbReference>
<dbReference type="GO" id="GO:0003735">
    <property type="term" value="F:structural constituent of ribosome"/>
    <property type="evidence" value="ECO:0007669"/>
    <property type="project" value="InterPro"/>
</dbReference>
<dbReference type="GO" id="GO:0000049">
    <property type="term" value="F:tRNA binding"/>
    <property type="evidence" value="ECO:0007669"/>
    <property type="project" value="UniProtKB-KW"/>
</dbReference>
<dbReference type="GO" id="GO:0006412">
    <property type="term" value="P:translation"/>
    <property type="evidence" value="ECO:0007669"/>
    <property type="project" value="UniProtKB-UniRule"/>
</dbReference>
<dbReference type="CDD" id="cd01433">
    <property type="entry name" value="Ribosomal_L16_L10e"/>
    <property type="match status" value="1"/>
</dbReference>
<dbReference type="FunFam" id="3.90.1170.10:FF:000001">
    <property type="entry name" value="50S ribosomal protein L16"/>
    <property type="match status" value="1"/>
</dbReference>
<dbReference type="Gene3D" id="3.90.1170.10">
    <property type="entry name" value="Ribosomal protein L10e/L16"/>
    <property type="match status" value="1"/>
</dbReference>
<dbReference type="HAMAP" id="MF_01342">
    <property type="entry name" value="Ribosomal_uL16"/>
    <property type="match status" value="1"/>
</dbReference>
<dbReference type="InterPro" id="IPR047873">
    <property type="entry name" value="Ribosomal_uL16"/>
</dbReference>
<dbReference type="InterPro" id="IPR000114">
    <property type="entry name" value="Ribosomal_uL16_bact-type"/>
</dbReference>
<dbReference type="InterPro" id="IPR020798">
    <property type="entry name" value="Ribosomal_uL16_CS"/>
</dbReference>
<dbReference type="InterPro" id="IPR016180">
    <property type="entry name" value="Ribosomal_uL16_dom"/>
</dbReference>
<dbReference type="InterPro" id="IPR036920">
    <property type="entry name" value="Ribosomal_uL16_sf"/>
</dbReference>
<dbReference type="NCBIfam" id="TIGR01164">
    <property type="entry name" value="rplP_bact"/>
    <property type="match status" value="1"/>
</dbReference>
<dbReference type="PANTHER" id="PTHR12220">
    <property type="entry name" value="50S/60S RIBOSOMAL PROTEIN L16"/>
    <property type="match status" value="1"/>
</dbReference>
<dbReference type="PANTHER" id="PTHR12220:SF13">
    <property type="entry name" value="LARGE RIBOSOMAL SUBUNIT PROTEIN UL16M"/>
    <property type="match status" value="1"/>
</dbReference>
<dbReference type="Pfam" id="PF00252">
    <property type="entry name" value="Ribosomal_L16"/>
    <property type="match status" value="1"/>
</dbReference>
<dbReference type="PRINTS" id="PR00060">
    <property type="entry name" value="RIBOSOMALL16"/>
</dbReference>
<dbReference type="SUPFAM" id="SSF54686">
    <property type="entry name" value="Ribosomal protein L16p/L10e"/>
    <property type="match status" value="1"/>
</dbReference>
<dbReference type="PROSITE" id="PS00586">
    <property type="entry name" value="RIBOSOMAL_L16_1"/>
    <property type="match status" value="1"/>
</dbReference>
<dbReference type="PROSITE" id="PS00701">
    <property type="entry name" value="RIBOSOMAL_L16_2"/>
    <property type="match status" value="1"/>
</dbReference>
<organism>
    <name type="scientific">Streptococcus pneumoniae (strain JJA)</name>
    <dbReference type="NCBI Taxonomy" id="488222"/>
    <lineage>
        <taxon>Bacteria</taxon>
        <taxon>Bacillati</taxon>
        <taxon>Bacillota</taxon>
        <taxon>Bacilli</taxon>
        <taxon>Lactobacillales</taxon>
        <taxon>Streptococcaceae</taxon>
        <taxon>Streptococcus</taxon>
    </lineage>
</organism>
<protein>
    <recommendedName>
        <fullName evidence="1">Large ribosomal subunit protein uL16</fullName>
    </recommendedName>
    <alternativeName>
        <fullName evidence="2">50S ribosomal protein L16</fullName>
    </alternativeName>
</protein>
<proteinExistence type="inferred from homology"/>
<accession>C1CC13</accession>
<name>RL16_STRZJ</name>
<keyword id="KW-0687">Ribonucleoprotein</keyword>
<keyword id="KW-0689">Ribosomal protein</keyword>
<keyword id="KW-0694">RNA-binding</keyword>
<keyword id="KW-0699">rRNA-binding</keyword>
<keyword id="KW-0820">tRNA-binding</keyword>